<comment type="function">
    <text evidence="5 7 8 10">Involved in fertilization by facilitating sperm penetration of the zona pellucida (PubMed:19596312, PubMed:22817830). May promote spermatocyte apoptosis, thereby limiting sperm production. In adults, may reduce testosterone synthesis in Leydig cells (PubMed:18818293). Is not essential either for development or fertility (PubMed:19596310).</text>
</comment>
<comment type="subunit">
    <text evidence="6 9">Interacts with SLXL1; Co-localize in seminiferous tubules (PubMed:21698294). Interacts with SLY (PubMed:19176879).</text>
</comment>
<comment type="subcellular location">
    <subcellularLocation>
        <location>Secreted</location>
    </subcellularLocation>
    <subcellularLocation>
        <location evidence="4 6">Cytoplasmic vesicle</location>
        <location evidence="4 6">Secretory vesicle</location>
        <location evidence="4 6">Acrosome</location>
    </subcellularLocation>
    <text evidence="4">Localized specifically to the crescent shaped acrosome at the apex of the sperm head.</text>
</comment>
<comment type="tissue specificity">
    <text evidence="3 4 7 10">Testis-specific. Abundant in the seminiferous tubules where it is associated with developing spermatocytes. Expressed only in testis (at protein level) (PubMed:15892050, PubMed:19596310). Not detectable on postnatal days 4 and 9 but after day 18 it gradually increased as the development of testes progressed. Expressed at high levels in testis and at weak levels in epididymis (PubMed:22817830).</text>
</comment>
<comment type="developmental stage">
    <text evidence="3 4 8 11">Expressed in the embryo only after day 15. In the adult, expressed only in developing spermatocytes. Expressed in the developing cochlea. Detected only in developing spermatocytes and spermatids in seminiferous tubules. Moreover, first appears specifically in zygotene/pachytene spermatocytes. Found in puddles in the pachytene spermatocytes of all stage tubules and then in crescent shaped structures characteristic of acrosomes in early step spermatids. Detected in mature sperm (PubMed:15892050). Expressed strongly in trophoblast stem cells and further up-regulated in trophoblast giant cells. Expression is maintained in post-implantation placental tissues in utero. Highly expressed from 7.5 dpc trophectoderm to 12.5 dpc placenta. Expression remains baseline in postimplantation embryonic tissues (PubMed:19596312).</text>
</comment>
<comment type="domain">
    <text>Contains a N-terminal domain similar to that of the N-terminal section of DKK3.</text>
</comment>
<comment type="PTM">
    <text evidence="4 7">N-glycosylated during spermatogenesis. Not N-glycosylated in mature sperm.</text>
</comment>
<comment type="disruption phenotype">
    <text evidence="5 7">Nullizygous embryos Dkkl1 mice develop into viable, fertile adults.</text>
</comment>
<sequence>MCRLRVLLLLLPLAFVSSSALPIHDVDSQQNTSGFLGLQRLLQSFSRLFLKNDLLRDLDNFFSSPMDFRDLPRNFHQEENQEHRMGNHTLSSHLQIDKVTDNQTGEVLISEKVEASIEPERNPEGDWKVPKVEAKEPPVPVQKVTDSLHPEPRQVAFWIMKMPRRRTQPDVQDGGRWLIEKRHRMQAIRDGLRGGAREDSLEDGVHIPQHAKLPVRKTHFLYILRPSQQL</sequence>
<evidence type="ECO:0000250" key="1">
    <source>
        <dbReference type="UniProtKB" id="Q9UK85"/>
    </source>
</evidence>
<evidence type="ECO:0000255" key="2"/>
<evidence type="ECO:0000269" key="3">
    <source>
    </source>
</evidence>
<evidence type="ECO:0000269" key="4">
    <source>
    </source>
</evidence>
<evidence type="ECO:0000269" key="5">
    <source>
    </source>
</evidence>
<evidence type="ECO:0000269" key="6">
    <source>
    </source>
</evidence>
<evidence type="ECO:0000269" key="7">
    <source>
    </source>
</evidence>
<evidence type="ECO:0000269" key="8">
    <source>
    </source>
</evidence>
<evidence type="ECO:0000269" key="9">
    <source>
    </source>
</evidence>
<evidence type="ECO:0000269" key="10">
    <source>
    </source>
</evidence>
<evidence type="ECO:0000269" key="11">
    <source>
    </source>
</evidence>
<evidence type="ECO:0000303" key="12">
    <source>
    </source>
</evidence>
<evidence type="ECO:0000305" key="13"/>
<evidence type="ECO:0000312" key="14">
    <source>
        <dbReference type="MGI" id="MGI:1354963"/>
    </source>
</evidence>
<name>DKKL1_MOUSE</name>
<protein>
    <recommendedName>
        <fullName evidence="1">Dickkopf-like protein 1</fullName>
    </recommendedName>
    <alternativeName>
        <fullName>Protein soggy-1</fullName>
        <shortName evidence="12">SGY-1</shortName>
    </alternativeName>
</protein>
<reference key="1">
    <citation type="journal article" date="1999" name="Gene">
        <title>Functional and structural diversity of the human Dickkopf gene family.</title>
        <authorList>
            <person name="Krupnik V.E."/>
            <person name="Sharp J.D."/>
            <person name="Jiang C."/>
            <person name="Robison K."/>
            <person name="Chickering T.W."/>
            <person name="Amaravadi L."/>
            <person name="Brown D.E."/>
            <person name="Guyot D."/>
            <person name="Mays G."/>
            <person name="Leiby K."/>
            <person name="Chang B."/>
            <person name="Duong T."/>
            <person name="Goodearl A.D.J."/>
            <person name="Gearing D.P."/>
            <person name="Sokol S.Y."/>
            <person name="McCarthy S.A."/>
        </authorList>
    </citation>
    <scope>NUCLEOTIDE SEQUENCE [MRNA]</scope>
</reference>
<reference key="2">
    <citation type="journal article" date="2000" name="Nucleic Acids Res.">
        <title>Soggy, a spermatocyte-specific gene, lies upstream of and antipodal to TEAD-2, a transcription factor expressed at the beginning of mouse development.</title>
        <authorList>
            <person name="Kaneko K.J."/>
            <person name="DePamphilis M.L."/>
        </authorList>
    </citation>
    <scope>NUCLEOTIDE SEQUENCE [MRNA]</scope>
    <scope>NUCLEOTIDE SEQUENCE [GENOMIC DNA] OF 1-128</scope>
    <scope>TISSUE SPECIFICITY</scope>
    <scope>DEVELOPMENTAL STAGE</scope>
</reference>
<reference key="3">
    <citation type="submission" date="2000-11" db="EMBL/GenBank/DDBJ databases">
        <title>Genomic organization of the human and mouse Soggy.</title>
        <authorList>
            <person name="Tate G."/>
        </authorList>
    </citation>
    <scope>NUCLEOTIDE SEQUENCE [GENOMIC DNA]</scope>
    <source>
        <strain>129/Sv</strain>
    </source>
</reference>
<reference key="4">
    <citation type="journal article" date="2004" name="Genome Res.">
        <title>The status, quality, and expansion of the NIH full-length cDNA project: the Mammalian Gene Collection (MGC).</title>
        <authorList>
            <consortium name="The MGC Project Team"/>
        </authorList>
    </citation>
    <scope>NUCLEOTIDE SEQUENCE [LARGE SCALE MRNA]</scope>
    <source>
        <tissue>Mammary gland</tissue>
    </source>
</reference>
<reference key="5">
    <citation type="journal article" date="2005" name="Mol. Reprod. Dev.">
        <title>DkkL1 (Soggy), a Dickkopf family member, localizes to the acrosome during mammalian spermatogenesis.</title>
        <authorList>
            <person name="Kohn M.J."/>
            <person name="Kaneko K.J."/>
            <person name="DePamphilis M.L."/>
        </authorList>
    </citation>
    <scope>TISSUE SPECIFICITY</scope>
    <scope>GLYCOSYLATION</scope>
    <scope>DEVELOPMENTAL STAGE</scope>
    <scope>SUBCELLULAR LOCATION</scope>
</reference>
<reference key="6">
    <citation type="journal article" date="2009" name="Biol. Reprod.">
        <title>The multi-copy mouse gene Sycp3-like Y-linked (Sly) encodes an abundant spermatid protein that interacts with a histone acetyltransferase and an acrosomal protein.</title>
        <authorList>
            <person name="Reynard L.N."/>
            <person name="Cocquet J."/>
            <person name="Burgoyne P.S."/>
        </authorList>
    </citation>
    <scope>INTERACTION WITH SLY</scope>
    <scope>SUBCELLULAR LOCATION</scope>
</reference>
<reference key="7">
    <citation type="journal article" date="2009" name="Endocrinology">
        <title>Dickkopf-like1 regulates postpubertal spermatocyte apoptosis and testosterone production.</title>
        <authorList>
            <person name="Dakhova O."/>
            <person name="O'Day D."/>
            <person name="Kinet N."/>
            <person name="Yucer N."/>
            <person name="Wiese M."/>
            <person name="Shetty G."/>
            <person name="Ducy P."/>
        </authorList>
    </citation>
    <scope>DISRUPTION PHENOTYPE</scope>
    <scope>FUNCTION</scope>
</reference>
<reference key="8">
    <citation type="journal article" date="2010" name="Cell">
        <title>A tissue-specific atlas of mouse protein phosphorylation and expression.</title>
        <authorList>
            <person name="Huttlin E.L."/>
            <person name="Jedrychowski M.P."/>
            <person name="Elias J.E."/>
            <person name="Goswami T."/>
            <person name="Rad R."/>
            <person name="Beausoleil S.A."/>
            <person name="Villen J."/>
            <person name="Haas W."/>
            <person name="Sowa M.E."/>
            <person name="Gygi S.P."/>
        </authorList>
    </citation>
    <scope>IDENTIFICATION BY MASS SPECTROMETRY [LARGE SCALE ANALYSIS]</scope>
    <source>
        <tissue>Testis</tissue>
    </source>
</reference>
<reference key="9">
    <citation type="journal article" date="2010" name="Fertil. Steril.">
        <title>The acrosomal protein Dickkopf-like 1 (DKKL1) is not essential for fertility.</title>
        <authorList>
            <person name="Kaneko K.J."/>
            <person name="Kohn M.J."/>
            <person name="Liu C."/>
            <person name="DePamphilis M.L."/>
        </authorList>
    </citation>
    <scope>DISRUPTION PHENOTYPE</scope>
    <scope>TISSUE SPECIFICITY</scope>
    <scope>GLYCOSYLATION</scope>
    <scope>FUNCTION</scope>
</reference>
<reference key="10">
    <citation type="journal article" date="2010" name="Fertil. Steril.">
        <title>The acrosomal protein Dickkopf-like 1 (DKKL1) facilitates sperm penetration of the zona pellucida.</title>
        <authorList>
            <person name="Kohn M.J."/>
            <person name="Sztein J."/>
            <person name="Yagi R."/>
            <person name="DePamphilis M.L."/>
            <person name="Kaneko K.J."/>
        </authorList>
    </citation>
    <scope>DEVELOPMENTAL STAGE</scope>
    <scope>FUNCTION</scope>
</reference>
<reference key="11">
    <citation type="journal article" date="2011" name="PLoS ONE">
        <title>SLXL1, a novel acrosomal protein, interacts with DKKL1 and is involved in fertilization in mice.</title>
        <authorList>
            <person name="Zhuang X.J."/>
            <person name="Hou X.J."/>
            <person name="Liao S.Y."/>
            <person name="Wang X.X."/>
            <person name="Cooke H.J."/>
            <person name="Zhang M."/>
            <person name="Han C."/>
        </authorList>
    </citation>
    <scope>INTERACTION WITH SLXL1</scope>
</reference>
<reference key="12">
    <citation type="journal article" date="2012" name="Reprod. Biol. Endocrinol.">
        <title>Developmental expression and function of DKKL1/Dkkl1 in humans and mice.</title>
        <authorList>
            <person name="Yan Q."/>
            <person name="Wu X."/>
            <person name="Chen C."/>
            <person name="Diao R."/>
            <person name="Lai Y."/>
            <person name="Huang J."/>
            <person name="Chen J."/>
            <person name="Yu Z."/>
            <person name="Gui Y."/>
            <person name="Tang A."/>
            <person name="Cai Z."/>
        </authorList>
    </citation>
    <scope>TISSUE SPECIFICITY</scope>
    <scope>FUNCTION</scope>
</reference>
<reference key="13">
    <citation type="journal article" date="2016" name="Sci. Rep.">
        <title>Kremen1 regulates mechanosensory hair cell development in the mammalian cochlea and the zebrafish lateral line.</title>
        <authorList>
            <person name="Mulvaney J.F."/>
            <person name="Thompkins C."/>
            <person name="Noda T."/>
            <person name="Nishimura K."/>
            <person name="Sun W.W."/>
            <person name="Lin S.Y."/>
            <person name="Coffin A."/>
            <person name="Dabdoub A."/>
        </authorList>
    </citation>
    <scope>DEVELOPMENTAL STAGE</scope>
</reference>
<proteinExistence type="evidence at protein level"/>
<keyword id="KW-0968">Cytoplasmic vesicle</keyword>
<keyword id="KW-0325">Glycoprotein</keyword>
<keyword id="KW-1185">Reference proteome</keyword>
<keyword id="KW-0964">Secreted</keyword>
<keyword id="KW-0732">Signal</keyword>
<gene>
    <name evidence="14" type="primary">Dkkl1</name>
    <name type="synonym">Sgy1</name>
</gene>
<dbReference type="EMBL" id="AF177399">
    <property type="protein sequence ID" value="AAF02679.1"/>
    <property type="molecule type" value="mRNA"/>
</dbReference>
<dbReference type="EMBL" id="AF274312">
    <property type="protein sequence ID" value="AAG21340.1"/>
    <property type="molecule type" value="mRNA"/>
</dbReference>
<dbReference type="EMBL" id="AF274313">
    <property type="protein sequence ID" value="AAG21341.1"/>
    <property type="molecule type" value="Genomic_DNA"/>
</dbReference>
<dbReference type="EMBL" id="AB051203">
    <property type="protein sequence ID" value="BAB20027.1"/>
    <property type="molecule type" value="Genomic_DNA"/>
</dbReference>
<dbReference type="EMBL" id="BC002215">
    <property type="protein sequence ID" value="AAH02215.1"/>
    <property type="molecule type" value="mRNA"/>
</dbReference>
<dbReference type="CCDS" id="CCDS21235.1"/>
<dbReference type="RefSeq" id="NP_056604.2">
    <property type="nucleotide sequence ID" value="NM_015789.3"/>
</dbReference>
<dbReference type="FunCoup" id="Q9QZL9">
    <property type="interactions" value="77"/>
</dbReference>
<dbReference type="IntAct" id="Q9QZL9">
    <property type="interactions" value="1"/>
</dbReference>
<dbReference type="STRING" id="10090.ENSMUSP00000033057"/>
<dbReference type="GlyCosmos" id="Q9QZL9">
    <property type="glycosylation" value="3 sites, No reported glycans"/>
</dbReference>
<dbReference type="GlyGen" id="Q9QZL9">
    <property type="glycosylation" value="3 sites"/>
</dbReference>
<dbReference type="PhosphoSitePlus" id="Q9QZL9"/>
<dbReference type="PaxDb" id="10090-ENSMUSP00000033057"/>
<dbReference type="ProteomicsDB" id="279719"/>
<dbReference type="Antibodypedia" id="31990">
    <property type="antibodies" value="266 antibodies from 26 providers"/>
</dbReference>
<dbReference type="DNASU" id="50722"/>
<dbReference type="Ensembl" id="ENSMUST00000033057.9">
    <property type="protein sequence ID" value="ENSMUSP00000033057.8"/>
    <property type="gene ID" value="ENSMUSG00000030792.9"/>
</dbReference>
<dbReference type="GeneID" id="50722"/>
<dbReference type="KEGG" id="mmu:50722"/>
<dbReference type="UCSC" id="uc009guc.2">
    <property type="organism name" value="mouse"/>
</dbReference>
<dbReference type="AGR" id="MGI:1354963"/>
<dbReference type="CTD" id="27120"/>
<dbReference type="MGI" id="MGI:1354963">
    <property type="gene designation" value="Dkkl1"/>
</dbReference>
<dbReference type="VEuPathDB" id="HostDB:ENSMUSG00000030792"/>
<dbReference type="eggNOG" id="ENOG502SZ2Z">
    <property type="taxonomic scope" value="Eukaryota"/>
</dbReference>
<dbReference type="GeneTree" id="ENSGT00390000014026"/>
<dbReference type="HOGENOM" id="CLU_100447_0_0_1"/>
<dbReference type="InParanoid" id="Q9QZL9"/>
<dbReference type="OMA" id="APEGSHW"/>
<dbReference type="OrthoDB" id="6359792at2759"/>
<dbReference type="PhylomeDB" id="Q9QZL9"/>
<dbReference type="TreeFam" id="TF337340"/>
<dbReference type="BioGRID-ORCS" id="50722">
    <property type="hits" value="3 hits in 76 CRISPR screens"/>
</dbReference>
<dbReference type="ChiTaRS" id="Dkkl1">
    <property type="organism name" value="mouse"/>
</dbReference>
<dbReference type="PRO" id="PR:Q9QZL9"/>
<dbReference type="Proteomes" id="UP000000589">
    <property type="component" value="Chromosome 7"/>
</dbReference>
<dbReference type="RNAct" id="Q9QZL9">
    <property type="molecule type" value="protein"/>
</dbReference>
<dbReference type="Bgee" id="ENSMUSG00000030792">
    <property type="expression patterns" value="Expressed in seminiferous tubule of testis and 79 other cell types or tissues"/>
</dbReference>
<dbReference type="ExpressionAtlas" id="Q9QZL9">
    <property type="expression patterns" value="baseline and differential"/>
</dbReference>
<dbReference type="GO" id="GO:0001669">
    <property type="term" value="C:acrosomal vesicle"/>
    <property type="evidence" value="ECO:0000314"/>
    <property type="project" value="UniProtKB"/>
</dbReference>
<dbReference type="GO" id="GO:0005576">
    <property type="term" value="C:extracellular region"/>
    <property type="evidence" value="ECO:0007669"/>
    <property type="project" value="UniProtKB-SubCell"/>
</dbReference>
<dbReference type="GO" id="GO:0060070">
    <property type="term" value="P:canonical Wnt signaling pathway"/>
    <property type="evidence" value="ECO:0000314"/>
    <property type="project" value="MGI"/>
</dbReference>
<dbReference type="GO" id="GO:2000225">
    <property type="term" value="P:negative regulation of testosterone biosynthetic process"/>
    <property type="evidence" value="ECO:0000315"/>
    <property type="project" value="UniProtKB"/>
</dbReference>
<dbReference type="GO" id="GO:0007341">
    <property type="term" value="P:penetration of zona pellucida"/>
    <property type="evidence" value="ECO:0000315"/>
    <property type="project" value="UniProtKB"/>
</dbReference>
<dbReference type="GO" id="GO:0043065">
    <property type="term" value="P:positive regulation of apoptotic process"/>
    <property type="evidence" value="ECO:0000315"/>
    <property type="project" value="UniProtKB"/>
</dbReference>
<dbReference type="GO" id="GO:0045600">
    <property type="term" value="P:positive regulation of fat cell differentiation"/>
    <property type="evidence" value="ECO:0000314"/>
    <property type="project" value="MGI"/>
</dbReference>
<dbReference type="CDD" id="cd23006">
    <property type="entry name" value="Dkkl1"/>
    <property type="match status" value="1"/>
</dbReference>
<dbReference type="InterPro" id="IPR039863">
    <property type="entry name" value="DKK1-4"/>
</dbReference>
<dbReference type="InterPro" id="IPR049632">
    <property type="entry name" value="DKKL1"/>
</dbReference>
<dbReference type="PANTHER" id="PTHR12113:SF7">
    <property type="entry name" value="DICKKOPF-LIKE PROTEIN 1"/>
    <property type="match status" value="1"/>
</dbReference>
<dbReference type="PANTHER" id="PTHR12113">
    <property type="entry name" value="DICKKOPF3-LIKE 3"/>
    <property type="match status" value="1"/>
</dbReference>
<feature type="signal peptide" evidence="2">
    <location>
        <begin position="1"/>
        <end position="20"/>
    </location>
</feature>
<feature type="chain" id="PRO_0000007229" description="Dickkopf-like protein 1">
    <location>
        <begin position="21"/>
        <end position="230"/>
    </location>
</feature>
<feature type="glycosylation site" description="N-linked (GlcNAc...) asparagine" evidence="2">
    <location>
        <position position="31"/>
    </location>
</feature>
<feature type="glycosylation site" description="N-linked (GlcNAc...) asparagine" evidence="2">
    <location>
        <position position="87"/>
    </location>
</feature>
<feature type="glycosylation site" description="N-linked (GlcNAc...) asparagine" evidence="2">
    <location>
        <position position="102"/>
    </location>
</feature>
<feature type="sequence conflict" description="In Ref. 3; BAB20027." evidence="13" ref="3">
    <original>F</original>
    <variation>V</variation>
    <location>
        <position position="35"/>
    </location>
</feature>
<feature type="sequence conflict" description="In Ref. 3; BAB20027." evidence="13" ref="3">
    <original>R</original>
    <variation>S</variation>
    <location>
        <position position="40"/>
    </location>
</feature>
<feature type="sequence conflict" description="In Ref. 1; AAF02679." evidence="13" ref="1">
    <original>L</original>
    <variation>H</variation>
    <location>
        <position position="108"/>
    </location>
</feature>
<accession>Q9QZL9</accession>
<accession>Q9EQT4</accession>
<accession>Q9ERW0</accession>
<accession>Q9ERW1</accession>
<organism>
    <name type="scientific">Mus musculus</name>
    <name type="common">Mouse</name>
    <dbReference type="NCBI Taxonomy" id="10090"/>
    <lineage>
        <taxon>Eukaryota</taxon>
        <taxon>Metazoa</taxon>
        <taxon>Chordata</taxon>
        <taxon>Craniata</taxon>
        <taxon>Vertebrata</taxon>
        <taxon>Euteleostomi</taxon>
        <taxon>Mammalia</taxon>
        <taxon>Eutheria</taxon>
        <taxon>Euarchontoglires</taxon>
        <taxon>Glires</taxon>
        <taxon>Rodentia</taxon>
        <taxon>Myomorpha</taxon>
        <taxon>Muroidea</taxon>
        <taxon>Muridae</taxon>
        <taxon>Murinae</taxon>
        <taxon>Mus</taxon>
        <taxon>Mus</taxon>
    </lineage>
</organism>